<organism>
    <name type="scientific">Buchnera aphidicola subsp. Acyrthosiphon pisum (strain APS)</name>
    <name type="common">Acyrthosiphon pisum symbiotic bacterium</name>
    <dbReference type="NCBI Taxonomy" id="107806"/>
    <lineage>
        <taxon>Bacteria</taxon>
        <taxon>Pseudomonadati</taxon>
        <taxon>Pseudomonadota</taxon>
        <taxon>Gammaproteobacteria</taxon>
        <taxon>Enterobacterales</taxon>
        <taxon>Erwiniaceae</taxon>
        <taxon>Buchnera</taxon>
    </lineage>
</organism>
<dbReference type="EMBL" id="AJ239043">
    <property type="protein sequence ID" value="CAB90995.1"/>
    <property type="molecule type" value="Genomic_DNA"/>
</dbReference>
<dbReference type="EMBL" id="BA000003">
    <property type="protein sequence ID" value="BAB13094.1"/>
    <property type="molecule type" value="Genomic_DNA"/>
</dbReference>
<dbReference type="RefSeq" id="NP_240208.1">
    <property type="nucleotide sequence ID" value="NC_002528.1"/>
</dbReference>
<dbReference type="RefSeq" id="WP_009874348.1">
    <property type="nucleotide sequence ID" value="NZ_AP036055.1"/>
</dbReference>
<dbReference type="SMR" id="P57471"/>
<dbReference type="STRING" id="563178.BUAP5A_384"/>
<dbReference type="EnsemblBacteria" id="BAB13094">
    <property type="protein sequence ID" value="BAB13094"/>
    <property type="gene ID" value="BAB13094"/>
</dbReference>
<dbReference type="KEGG" id="buc:BU391"/>
<dbReference type="PATRIC" id="fig|107806.10.peg.405"/>
<dbReference type="eggNOG" id="COG0102">
    <property type="taxonomic scope" value="Bacteria"/>
</dbReference>
<dbReference type="HOGENOM" id="CLU_082184_2_2_6"/>
<dbReference type="Proteomes" id="UP000001806">
    <property type="component" value="Chromosome"/>
</dbReference>
<dbReference type="GO" id="GO:0022625">
    <property type="term" value="C:cytosolic large ribosomal subunit"/>
    <property type="evidence" value="ECO:0007669"/>
    <property type="project" value="TreeGrafter"/>
</dbReference>
<dbReference type="GO" id="GO:0003729">
    <property type="term" value="F:mRNA binding"/>
    <property type="evidence" value="ECO:0007669"/>
    <property type="project" value="TreeGrafter"/>
</dbReference>
<dbReference type="GO" id="GO:0003735">
    <property type="term" value="F:structural constituent of ribosome"/>
    <property type="evidence" value="ECO:0007669"/>
    <property type="project" value="InterPro"/>
</dbReference>
<dbReference type="GO" id="GO:0017148">
    <property type="term" value="P:negative regulation of translation"/>
    <property type="evidence" value="ECO:0007669"/>
    <property type="project" value="TreeGrafter"/>
</dbReference>
<dbReference type="GO" id="GO:0006412">
    <property type="term" value="P:translation"/>
    <property type="evidence" value="ECO:0007669"/>
    <property type="project" value="UniProtKB-UniRule"/>
</dbReference>
<dbReference type="CDD" id="cd00392">
    <property type="entry name" value="Ribosomal_L13"/>
    <property type="match status" value="1"/>
</dbReference>
<dbReference type="FunFam" id="3.90.1180.10:FF:000001">
    <property type="entry name" value="50S ribosomal protein L13"/>
    <property type="match status" value="1"/>
</dbReference>
<dbReference type="Gene3D" id="3.90.1180.10">
    <property type="entry name" value="Ribosomal protein L13"/>
    <property type="match status" value="1"/>
</dbReference>
<dbReference type="HAMAP" id="MF_01366">
    <property type="entry name" value="Ribosomal_uL13"/>
    <property type="match status" value="1"/>
</dbReference>
<dbReference type="InterPro" id="IPR005822">
    <property type="entry name" value="Ribosomal_uL13"/>
</dbReference>
<dbReference type="InterPro" id="IPR005823">
    <property type="entry name" value="Ribosomal_uL13_bac-type"/>
</dbReference>
<dbReference type="InterPro" id="IPR023563">
    <property type="entry name" value="Ribosomal_uL13_CS"/>
</dbReference>
<dbReference type="InterPro" id="IPR036899">
    <property type="entry name" value="Ribosomal_uL13_sf"/>
</dbReference>
<dbReference type="NCBIfam" id="TIGR01066">
    <property type="entry name" value="rplM_bact"/>
    <property type="match status" value="1"/>
</dbReference>
<dbReference type="PANTHER" id="PTHR11545:SF2">
    <property type="entry name" value="LARGE RIBOSOMAL SUBUNIT PROTEIN UL13M"/>
    <property type="match status" value="1"/>
</dbReference>
<dbReference type="PANTHER" id="PTHR11545">
    <property type="entry name" value="RIBOSOMAL PROTEIN L13"/>
    <property type="match status" value="1"/>
</dbReference>
<dbReference type="Pfam" id="PF00572">
    <property type="entry name" value="Ribosomal_L13"/>
    <property type="match status" value="1"/>
</dbReference>
<dbReference type="PIRSF" id="PIRSF002181">
    <property type="entry name" value="Ribosomal_L13"/>
    <property type="match status" value="1"/>
</dbReference>
<dbReference type="SUPFAM" id="SSF52161">
    <property type="entry name" value="Ribosomal protein L13"/>
    <property type="match status" value="1"/>
</dbReference>
<dbReference type="PROSITE" id="PS00783">
    <property type="entry name" value="RIBOSOMAL_L13"/>
    <property type="match status" value="1"/>
</dbReference>
<comment type="function">
    <text evidence="1">This protein is one of the early assembly proteins of the 50S ribosomal subunit, although it is not seen to bind rRNA by itself. It is important during the early stages of 50S assembly.</text>
</comment>
<comment type="subunit">
    <text evidence="1">Part of the 50S ribosomal subunit.</text>
</comment>
<comment type="similarity">
    <text evidence="1">Belongs to the universal ribosomal protein uL13 family.</text>
</comment>
<reference key="1">
    <citation type="journal article" date="2000" name="J. Bacteriol.">
        <title>Prephenate dehydratase from the aphid endosymbiont (Buchnera) displays changes in the regulatory domain that suggest its desensitization to inhibition by phenylalanine.</title>
        <authorList>
            <person name="Jimenez N."/>
            <person name="Gonzalez-Candelas F."/>
            <person name="Silva F.J."/>
        </authorList>
    </citation>
    <scope>NUCLEOTIDE SEQUENCE [GENOMIC DNA]</scope>
</reference>
<reference key="2">
    <citation type="journal article" date="2000" name="Nature">
        <title>Genome sequence of the endocellular bacterial symbiont of aphids Buchnera sp. APS.</title>
        <authorList>
            <person name="Shigenobu S."/>
            <person name="Watanabe H."/>
            <person name="Hattori M."/>
            <person name="Sakaki Y."/>
            <person name="Ishikawa H."/>
        </authorList>
    </citation>
    <scope>NUCLEOTIDE SEQUENCE [LARGE SCALE GENOMIC DNA]</scope>
    <source>
        <strain>APS</strain>
    </source>
</reference>
<feature type="chain" id="PRO_0000133727" description="Large ribosomal subunit protein uL13">
    <location>
        <begin position="1"/>
        <end position="142"/>
    </location>
</feature>
<name>RL13_BUCAI</name>
<protein>
    <recommendedName>
        <fullName evidence="1">Large ribosomal subunit protein uL13</fullName>
    </recommendedName>
    <alternativeName>
        <fullName evidence="2">50S ribosomal protein L13</fullName>
    </alternativeName>
</protein>
<keyword id="KW-1185">Reference proteome</keyword>
<keyword id="KW-0687">Ribonucleoprotein</keyword>
<keyword id="KW-0689">Ribosomal protein</keyword>
<sequence length="142" mass="16265">MKTFSIKSSNIKRHWYYVDATNKILGRLASALSFHLRGKHKTEYTPHLDTGDYIIVINASKILVTGNKRINKIYYHHTGYVGGIKQSRFEEMISSHPERVIEIAVKGMLPKGALGRSMFKKLKVFSNENHEHIAQCPQLLNI</sequence>
<gene>
    <name evidence="1" type="primary">rplM</name>
    <name type="ordered locus">BU391</name>
</gene>
<accession>P57471</accession>
<accession>Q9L4J3</accession>
<proteinExistence type="inferred from homology"/>
<evidence type="ECO:0000255" key="1">
    <source>
        <dbReference type="HAMAP-Rule" id="MF_01366"/>
    </source>
</evidence>
<evidence type="ECO:0000305" key="2"/>